<protein>
    <recommendedName>
        <fullName evidence="1">Sulfur carrier protein FdhD</fullName>
    </recommendedName>
</protein>
<keyword id="KW-0963">Cytoplasm</keyword>
<keyword id="KW-0501">Molybdenum cofactor biosynthesis</keyword>
<sequence>MDIVSHQKIRRFEAGTFQEIESSVATEYPLTIYVNDQELVTIVCTPEYLEDLVVGFLTSEGIVRGPQDIDSVDIIEATGHAKVSANFVNKFNAKYRGKRYITSCCGKSRENFYFQSDASLVNVKQNGSLQLTTDMIFRLMENFEQNSATFHQTGGVHNAALCSSAEIIYSRMDIGRHNALDKIYGRALQDGTSTEDKAIIFSGRISSEILVKTAKLGCGIILSRSAPTELAINMAEELNITTVGFIRGDRLNVYSGFERIT</sequence>
<name>FDHD_LISMF</name>
<accession>Q71WJ5</accession>
<evidence type="ECO:0000255" key="1">
    <source>
        <dbReference type="HAMAP-Rule" id="MF_00187"/>
    </source>
</evidence>
<dbReference type="EMBL" id="AE017262">
    <property type="protein sequence ID" value="AAT05321.1"/>
    <property type="molecule type" value="Genomic_DNA"/>
</dbReference>
<dbReference type="RefSeq" id="WP_003726479.1">
    <property type="nucleotide sequence ID" value="NC_002973.6"/>
</dbReference>
<dbReference type="SMR" id="Q71WJ5"/>
<dbReference type="KEGG" id="lmf:LMOf2365_2556"/>
<dbReference type="HOGENOM" id="CLU_056887_4_1_9"/>
<dbReference type="GO" id="GO:0005737">
    <property type="term" value="C:cytoplasm"/>
    <property type="evidence" value="ECO:0007669"/>
    <property type="project" value="UniProtKB-SubCell"/>
</dbReference>
<dbReference type="GO" id="GO:0097163">
    <property type="term" value="F:sulfur carrier activity"/>
    <property type="evidence" value="ECO:0007669"/>
    <property type="project" value="UniProtKB-UniRule"/>
</dbReference>
<dbReference type="GO" id="GO:0016783">
    <property type="term" value="F:sulfurtransferase activity"/>
    <property type="evidence" value="ECO:0007669"/>
    <property type="project" value="InterPro"/>
</dbReference>
<dbReference type="GO" id="GO:0006777">
    <property type="term" value="P:Mo-molybdopterin cofactor biosynthetic process"/>
    <property type="evidence" value="ECO:0007669"/>
    <property type="project" value="UniProtKB-UniRule"/>
</dbReference>
<dbReference type="Gene3D" id="3.10.20.10">
    <property type="match status" value="1"/>
</dbReference>
<dbReference type="Gene3D" id="3.40.140.10">
    <property type="entry name" value="Cytidine Deaminase, domain 2"/>
    <property type="match status" value="1"/>
</dbReference>
<dbReference type="HAMAP" id="MF_00187">
    <property type="entry name" value="FdhD"/>
    <property type="match status" value="1"/>
</dbReference>
<dbReference type="InterPro" id="IPR016193">
    <property type="entry name" value="Cytidine_deaminase-like"/>
</dbReference>
<dbReference type="InterPro" id="IPR003786">
    <property type="entry name" value="FdhD"/>
</dbReference>
<dbReference type="NCBIfam" id="TIGR00129">
    <property type="entry name" value="fdhD_narQ"/>
    <property type="match status" value="1"/>
</dbReference>
<dbReference type="PANTHER" id="PTHR30592">
    <property type="entry name" value="FORMATE DEHYDROGENASE"/>
    <property type="match status" value="1"/>
</dbReference>
<dbReference type="PANTHER" id="PTHR30592:SF1">
    <property type="entry name" value="SULFUR CARRIER PROTEIN FDHD"/>
    <property type="match status" value="1"/>
</dbReference>
<dbReference type="Pfam" id="PF02634">
    <property type="entry name" value="FdhD-NarQ"/>
    <property type="match status" value="1"/>
</dbReference>
<dbReference type="PIRSF" id="PIRSF015626">
    <property type="entry name" value="FdhD"/>
    <property type="match status" value="1"/>
</dbReference>
<dbReference type="SUPFAM" id="SSF53927">
    <property type="entry name" value="Cytidine deaminase-like"/>
    <property type="match status" value="1"/>
</dbReference>
<proteinExistence type="inferred from homology"/>
<feature type="chain" id="PRO_0000152907" description="Sulfur carrier protein FdhD">
    <location>
        <begin position="1"/>
        <end position="261"/>
    </location>
</feature>
<feature type="active site" description="Cysteine persulfide intermediate" evidence="1">
    <location>
        <position position="105"/>
    </location>
</feature>
<feature type="binding site" evidence="1">
    <location>
        <begin position="245"/>
        <end position="250"/>
    </location>
    <ligand>
        <name>Mo-bis(molybdopterin guanine dinucleotide)</name>
        <dbReference type="ChEBI" id="CHEBI:60539"/>
    </ligand>
</feature>
<reference key="1">
    <citation type="journal article" date="2004" name="Nucleic Acids Res.">
        <title>Whole genome comparisons of serotype 4b and 1/2a strains of the food-borne pathogen Listeria monocytogenes reveal new insights into the core genome components of this species.</title>
        <authorList>
            <person name="Nelson K.E."/>
            <person name="Fouts D.E."/>
            <person name="Mongodin E.F."/>
            <person name="Ravel J."/>
            <person name="DeBoy R.T."/>
            <person name="Kolonay J.F."/>
            <person name="Rasko D.A."/>
            <person name="Angiuoli S.V."/>
            <person name="Gill S.R."/>
            <person name="Paulsen I.T."/>
            <person name="Peterson J.D."/>
            <person name="White O."/>
            <person name="Nelson W.C."/>
            <person name="Nierman W.C."/>
            <person name="Beanan M.J."/>
            <person name="Brinkac L.M."/>
            <person name="Daugherty S.C."/>
            <person name="Dodson R.J."/>
            <person name="Durkin A.S."/>
            <person name="Madupu R."/>
            <person name="Haft D.H."/>
            <person name="Selengut J."/>
            <person name="Van Aken S.E."/>
            <person name="Khouri H.M."/>
            <person name="Fedorova N."/>
            <person name="Forberger H.A."/>
            <person name="Tran B."/>
            <person name="Kathariou S."/>
            <person name="Wonderling L.D."/>
            <person name="Uhlich G.A."/>
            <person name="Bayles D.O."/>
            <person name="Luchansky J.B."/>
            <person name="Fraser C.M."/>
        </authorList>
    </citation>
    <scope>NUCLEOTIDE SEQUENCE [LARGE SCALE GENOMIC DNA]</scope>
    <source>
        <strain>F2365</strain>
    </source>
</reference>
<organism>
    <name type="scientific">Listeria monocytogenes serotype 4b (strain F2365)</name>
    <dbReference type="NCBI Taxonomy" id="265669"/>
    <lineage>
        <taxon>Bacteria</taxon>
        <taxon>Bacillati</taxon>
        <taxon>Bacillota</taxon>
        <taxon>Bacilli</taxon>
        <taxon>Bacillales</taxon>
        <taxon>Listeriaceae</taxon>
        <taxon>Listeria</taxon>
    </lineage>
</organism>
<comment type="function">
    <text evidence="1">Required for formate dehydrogenase (FDH) activity. Acts as a sulfur carrier protein that transfers sulfur from IscS to the molybdenum cofactor prior to its insertion into FDH.</text>
</comment>
<comment type="subcellular location">
    <subcellularLocation>
        <location evidence="1">Cytoplasm</location>
    </subcellularLocation>
</comment>
<comment type="similarity">
    <text evidence="1">Belongs to the FdhD family.</text>
</comment>
<gene>
    <name evidence="1" type="primary">fdhD</name>
    <name type="ordered locus">LMOf2365_2556</name>
</gene>